<evidence type="ECO:0000255" key="1">
    <source>
        <dbReference type="HAMAP-Rule" id="MF_00503"/>
    </source>
</evidence>
<evidence type="ECO:0000305" key="2"/>
<sequence>MNVILLDKIANLGNLGDQVAVKAGYARNFLLPQGKAVVANAANTEVFEARRAELEAKLAADLAVATERADKINALESVVIASKAGDEGKLFGSIGNRDIADAVTAAGVELAKSEVRLPLGALRTTGEFEVEVQVHTEVKAIVKLSVVAED</sequence>
<protein>
    <recommendedName>
        <fullName evidence="1">Large ribosomal subunit protein bL9</fullName>
    </recommendedName>
    <alternativeName>
        <fullName evidence="2">50S ribosomal protein L9</fullName>
    </alternativeName>
</protein>
<proteinExistence type="inferred from homology"/>
<accession>B1KHY7</accession>
<reference key="1">
    <citation type="submission" date="2008-02" db="EMBL/GenBank/DDBJ databases">
        <title>Complete sequence of Shewanella woodyi ATCC 51908.</title>
        <authorList>
            <consortium name="US DOE Joint Genome Institute"/>
            <person name="Copeland A."/>
            <person name="Lucas S."/>
            <person name="Lapidus A."/>
            <person name="Glavina del Rio T."/>
            <person name="Dalin E."/>
            <person name="Tice H."/>
            <person name="Bruce D."/>
            <person name="Goodwin L."/>
            <person name="Pitluck S."/>
            <person name="Sims D."/>
            <person name="Brettin T."/>
            <person name="Detter J.C."/>
            <person name="Han C."/>
            <person name="Kuske C.R."/>
            <person name="Schmutz J."/>
            <person name="Larimer F."/>
            <person name="Land M."/>
            <person name="Hauser L."/>
            <person name="Kyrpides N."/>
            <person name="Lykidis A."/>
            <person name="Zhao J.-S."/>
            <person name="Richardson P."/>
        </authorList>
    </citation>
    <scope>NUCLEOTIDE SEQUENCE [LARGE SCALE GENOMIC DNA]</scope>
    <source>
        <strain>ATCC 51908 / MS32</strain>
    </source>
</reference>
<gene>
    <name evidence="1" type="primary">rplI</name>
    <name type="ordered locus">Swoo_4209</name>
</gene>
<keyword id="KW-1185">Reference proteome</keyword>
<keyword id="KW-0687">Ribonucleoprotein</keyword>
<keyword id="KW-0689">Ribosomal protein</keyword>
<keyword id="KW-0694">RNA-binding</keyword>
<keyword id="KW-0699">rRNA-binding</keyword>
<comment type="function">
    <text evidence="1">Binds to the 23S rRNA.</text>
</comment>
<comment type="similarity">
    <text evidence="1">Belongs to the bacterial ribosomal protein bL9 family.</text>
</comment>
<organism>
    <name type="scientific">Shewanella woodyi (strain ATCC 51908 / MS32)</name>
    <dbReference type="NCBI Taxonomy" id="392500"/>
    <lineage>
        <taxon>Bacteria</taxon>
        <taxon>Pseudomonadati</taxon>
        <taxon>Pseudomonadota</taxon>
        <taxon>Gammaproteobacteria</taxon>
        <taxon>Alteromonadales</taxon>
        <taxon>Shewanellaceae</taxon>
        <taxon>Shewanella</taxon>
    </lineage>
</organism>
<name>RL9_SHEWM</name>
<dbReference type="EMBL" id="CP000961">
    <property type="protein sequence ID" value="ACA88465.1"/>
    <property type="molecule type" value="Genomic_DNA"/>
</dbReference>
<dbReference type="RefSeq" id="WP_012326794.1">
    <property type="nucleotide sequence ID" value="NC_010506.1"/>
</dbReference>
<dbReference type="SMR" id="B1KHY7"/>
<dbReference type="STRING" id="392500.Swoo_4209"/>
<dbReference type="KEGG" id="swd:Swoo_4209"/>
<dbReference type="eggNOG" id="COG0359">
    <property type="taxonomic scope" value="Bacteria"/>
</dbReference>
<dbReference type="HOGENOM" id="CLU_078938_4_1_6"/>
<dbReference type="Proteomes" id="UP000002168">
    <property type="component" value="Chromosome"/>
</dbReference>
<dbReference type="GO" id="GO:1990904">
    <property type="term" value="C:ribonucleoprotein complex"/>
    <property type="evidence" value="ECO:0007669"/>
    <property type="project" value="UniProtKB-KW"/>
</dbReference>
<dbReference type="GO" id="GO:0005840">
    <property type="term" value="C:ribosome"/>
    <property type="evidence" value="ECO:0007669"/>
    <property type="project" value="UniProtKB-KW"/>
</dbReference>
<dbReference type="GO" id="GO:0019843">
    <property type="term" value="F:rRNA binding"/>
    <property type="evidence" value="ECO:0007669"/>
    <property type="project" value="UniProtKB-UniRule"/>
</dbReference>
<dbReference type="GO" id="GO:0003735">
    <property type="term" value="F:structural constituent of ribosome"/>
    <property type="evidence" value="ECO:0007669"/>
    <property type="project" value="InterPro"/>
</dbReference>
<dbReference type="GO" id="GO:0006412">
    <property type="term" value="P:translation"/>
    <property type="evidence" value="ECO:0007669"/>
    <property type="project" value="UniProtKB-UniRule"/>
</dbReference>
<dbReference type="FunFam" id="3.10.430.100:FF:000001">
    <property type="entry name" value="50S ribosomal protein L9"/>
    <property type="match status" value="1"/>
</dbReference>
<dbReference type="FunFam" id="3.40.5.10:FF:000001">
    <property type="entry name" value="50S ribosomal protein L9"/>
    <property type="match status" value="1"/>
</dbReference>
<dbReference type="Gene3D" id="3.10.430.100">
    <property type="entry name" value="Ribosomal protein L9, C-terminal domain"/>
    <property type="match status" value="1"/>
</dbReference>
<dbReference type="Gene3D" id="3.40.5.10">
    <property type="entry name" value="Ribosomal protein L9, N-terminal domain"/>
    <property type="match status" value="1"/>
</dbReference>
<dbReference type="HAMAP" id="MF_00503">
    <property type="entry name" value="Ribosomal_bL9"/>
    <property type="match status" value="1"/>
</dbReference>
<dbReference type="InterPro" id="IPR000244">
    <property type="entry name" value="Ribosomal_bL9"/>
</dbReference>
<dbReference type="InterPro" id="IPR009027">
    <property type="entry name" value="Ribosomal_bL9/RNase_H1_N"/>
</dbReference>
<dbReference type="InterPro" id="IPR020594">
    <property type="entry name" value="Ribosomal_bL9_bac/chp"/>
</dbReference>
<dbReference type="InterPro" id="IPR020069">
    <property type="entry name" value="Ribosomal_bL9_C"/>
</dbReference>
<dbReference type="InterPro" id="IPR036791">
    <property type="entry name" value="Ribosomal_bL9_C_sf"/>
</dbReference>
<dbReference type="InterPro" id="IPR020070">
    <property type="entry name" value="Ribosomal_bL9_N"/>
</dbReference>
<dbReference type="InterPro" id="IPR036935">
    <property type="entry name" value="Ribosomal_bL9_N_sf"/>
</dbReference>
<dbReference type="NCBIfam" id="TIGR00158">
    <property type="entry name" value="L9"/>
    <property type="match status" value="1"/>
</dbReference>
<dbReference type="PANTHER" id="PTHR21368">
    <property type="entry name" value="50S RIBOSOMAL PROTEIN L9"/>
    <property type="match status" value="1"/>
</dbReference>
<dbReference type="Pfam" id="PF03948">
    <property type="entry name" value="Ribosomal_L9_C"/>
    <property type="match status" value="1"/>
</dbReference>
<dbReference type="Pfam" id="PF01281">
    <property type="entry name" value="Ribosomal_L9_N"/>
    <property type="match status" value="1"/>
</dbReference>
<dbReference type="SUPFAM" id="SSF55658">
    <property type="entry name" value="L9 N-domain-like"/>
    <property type="match status" value="1"/>
</dbReference>
<dbReference type="SUPFAM" id="SSF55653">
    <property type="entry name" value="Ribosomal protein L9 C-domain"/>
    <property type="match status" value="1"/>
</dbReference>
<dbReference type="PROSITE" id="PS00651">
    <property type="entry name" value="RIBOSOMAL_L9"/>
    <property type="match status" value="1"/>
</dbReference>
<feature type="chain" id="PRO_1000126972" description="Large ribosomal subunit protein bL9">
    <location>
        <begin position="1"/>
        <end position="150"/>
    </location>
</feature>